<dbReference type="EMBL" id="U39484">
    <property type="status" value="NOT_ANNOTATED_CDS"/>
    <property type="molecule type" value="Genomic_DNA"/>
</dbReference>
<dbReference type="EMBL" id="U00096">
    <property type="protein sequence ID" value="AAC74973.2"/>
    <property type="molecule type" value="Genomic_DNA"/>
</dbReference>
<dbReference type="EMBL" id="AP009048">
    <property type="protein sequence ID" value="BAA15727.1"/>
    <property type="molecule type" value="Genomic_DNA"/>
</dbReference>
<dbReference type="PIR" id="G64953">
    <property type="entry name" value="G64953"/>
</dbReference>
<dbReference type="RefSeq" id="NP_416416.2">
    <property type="nucleotide sequence ID" value="NC_000913.3"/>
</dbReference>
<dbReference type="RefSeq" id="WP_000082127.1">
    <property type="nucleotide sequence ID" value="NZ_STEB01000026.1"/>
</dbReference>
<dbReference type="BioGRID" id="4261037">
    <property type="interactions" value="20"/>
</dbReference>
<dbReference type="FunCoup" id="P0AD10">
    <property type="interactions" value="11"/>
</dbReference>
<dbReference type="IntAct" id="P0AD10">
    <property type="interactions" value="11"/>
</dbReference>
<dbReference type="STRING" id="511145.b4537"/>
<dbReference type="jPOST" id="P0AD10"/>
<dbReference type="PaxDb" id="511145-b4537"/>
<dbReference type="EnsemblBacteria" id="AAC74973">
    <property type="protein sequence ID" value="AAC74973"/>
    <property type="gene ID" value="b4537"/>
</dbReference>
<dbReference type="GeneID" id="93776205"/>
<dbReference type="GeneID" id="946388"/>
<dbReference type="KEGG" id="ecj:JW1891"/>
<dbReference type="KEGG" id="eco:b4537"/>
<dbReference type="KEGG" id="ecoc:C3026_10800"/>
<dbReference type="PATRIC" id="fig|511145.12.peg.1983"/>
<dbReference type="EchoBASE" id="EB3031"/>
<dbReference type="eggNOG" id="ENOG5032SA5">
    <property type="taxonomic scope" value="Bacteria"/>
</dbReference>
<dbReference type="HOGENOM" id="CLU_196838_0_0_6"/>
<dbReference type="InParanoid" id="P0AD10"/>
<dbReference type="OMA" id="ELKFAPQ"/>
<dbReference type="OrthoDB" id="6428553at2"/>
<dbReference type="BioCyc" id="EcoCyc:MONOMER0-2677"/>
<dbReference type="PRO" id="PR:P0AD10"/>
<dbReference type="Proteomes" id="UP000000625">
    <property type="component" value="Chromosome"/>
</dbReference>
<dbReference type="InterPro" id="IPR020262">
    <property type="entry name" value="Uncharacterised_YecJ"/>
</dbReference>
<dbReference type="Pfam" id="PF10964">
    <property type="entry name" value="DUF2766"/>
    <property type="match status" value="1"/>
</dbReference>
<organism>
    <name type="scientific">Escherichia coli (strain K12)</name>
    <dbReference type="NCBI Taxonomy" id="83333"/>
    <lineage>
        <taxon>Bacteria</taxon>
        <taxon>Pseudomonadati</taxon>
        <taxon>Pseudomonadota</taxon>
        <taxon>Gammaproteobacteria</taxon>
        <taxon>Enterobacterales</taxon>
        <taxon>Enterobacteriaceae</taxon>
        <taxon>Escherichia</taxon>
    </lineage>
</organism>
<feature type="chain" id="PRO_0000169077" description="Uncharacterized protein YecJ">
    <location>
        <begin position="1"/>
        <end position="83"/>
    </location>
</feature>
<keyword id="KW-1185">Reference proteome</keyword>
<protein>
    <recommendedName>
        <fullName>Uncharacterized protein YecJ</fullName>
    </recommendedName>
</protein>
<sequence>MSQPLNADQELVSDVVACQLVIKQILDVLDVIAPVEVREKMSSQLKNIDFTNHPAAADPVTMRAIQKAIALIELKFTPQGESH</sequence>
<name>YECJ_ECOLI</name>
<accession>P0AD10</accession>
<accession>P52092</accession>
<accession>P76307</accession>
<reference key="1">
    <citation type="submission" date="1995-10" db="EMBL/GenBank/DDBJ databases">
        <authorList>
            <person name="Robison K."/>
            <person name="Estep P."/>
            <person name="O'Keeffe T."/>
            <person name="Church G.M."/>
        </authorList>
    </citation>
    <scope>NUCLEOTIDE SEQUENCE [GENOMIC DNA]</scope>
    <source>
        <strain>K12 / EMG2</strain>
    </source>
</reference>
<reference key="2">
    <citation type="journal article" date="1996" name="DNA Res.">
        <title>A 460-kb DNA sequence of the Escherichia coli K-12 genome corresponding to the 40.1-50.0 min region on the linkage map.</title>
        <authorList>
            <person name="Itoh T."/>
            <person name="Aiba H."/>
            <person name="Baba T."/>
            <person name="Fujita K."/>
            <person name="Hayashi K."/>
            <person name="Inada T."/>
            <person name="Isono K."/>
            <person name="Kasai H."/>
            <person name="Kimura S."/>
            <person name="Kitakawa M."/>
            <person name="Kitagawa M."/>
            <person name="Makino K."/>
            <person name="Miki T."/>
            <person name="Mizobuchi K."/>
            <person name="Mori H."/>
            <person name="Mori T."/>
            <person name="Motomura K."/>
            <person name="Nakade S."/>
            <person name="Nakamura Y."/>
            <person name="Nashimoto H."/>
            <person name="Nishio Y."/>
            <person name="Oshima T."/>
            <person name="Saito N."/>
            <person name="Sampei G."/>
            <person name="Seki Y."/>
            <person name="Sivasundaram S."/>
            <person name="Tagami H."/>
            <person name="Takeda J."/>
            <person name="Takemoto K."/>
            <person name="Wada C."/>
            <person name="Yamamoto Y."/>
            <person name="Horiuchi T."/>
        </authorList>
    </citation>
    <scope>NUCLEOTIDE SEQUENCE [LARGE SCALE GENOMIC DNA]</scope>
    <source>
        <strain>K12 / W3110 / ATCC 27325 / DSM 5911</strain>
    </source>
</reference>
<reference key="3">
    <citation type="journal article" date="1997" name="Science">
        <title>The complete genome sequence of Escherichia coli K-12.</title>
        <authorList>
            <person name="Blattner F.R."/>
            <person name="Plunkett G. III"/>
            <person name="Bloch C.A."/>
            <person name="Perna N.T."/>
            <person name="Burland V."/>
            <person name="Riley M."/>
            <person name="Collado-Vides J."/>
            <person name="Glasner J.D."/>
            <person name="Rode C.K."/>
            <person name="Mayhew G.F."/>
            <person name="Gregor J."/>
            <person name="Davis N.W."/>
            <person name="Kirkpatrick H.A."/>
            <person name="Goeden M.A."/>
            <person name="Rose D.J."/>
            <person name="Mau B."/>
            <person name="Shao Y."/>
        </authorList>
    </citation>
    <scope>NUCLEOTIDE SEQUENCE [LARGE SCALE GENOMIC DNA]</scope>
    <source>
        <strain>K12 / MG1655 / ATCC 47076</strain>
    </source>
</reference>
<reference key="4">
    <citation type="journal article" date="2006" name="Mol. Syst. Biol.">
        <title>Highly accurate genome sequences of Escherichia coli K-12 strains MG1655 and W3110.</title>
        <authorList>
            <person name="Hayashi K."/>
            <person name="Morooka N."/>
            <person name="Yamamoto Y."/>
            <person name="Fujita K."/>
            <person name="Isono K."/>
            <person name="Choi S."/>
            <person name="Ohtsubo E."/>
            <person name="Baba T."/>
            <person name="Wanner B.L."/>
            <person name="Mori H."/>
            <person name="Horiuchi T."/>
        </authorList>
    </citation>
    <scope>NUCLEOTIDE SEQUENCE [LARGE SCALE GENOMIC DNA]</scope>
    <source>
        <strain>K12 / W3110 / ATCC 27325 / DSM 5911</strain>
    </source>
</reference>
<reference key="5">
    <citation type="unpublished observations" date="1996-03">
        <authorList>
            <person name="Rudd K.E."/>
        </authorList>
    </citation>
    <scope>IDENTIFICATION</scope>
</reference>
<proteinExistence type="predicted"/>
<gene>
    <name type="primary">yecJ</name>
    <name type="ordered locus">b4537</name>
    <name type="ordered locus">JW1891</name>
</gene>